<feature type="chain" id="PRO_0000358478" description="NADH-quinone oxidoreductase subunit B">
    <location>
        <begin position="1"/>
        <end position="159"/>
    </location>
</feature>
<feature type="binding site" evidence="2">
    <location>
        <position position="37"/>
    </location>
    <ligand>
        <name>[4Fe-4S] cluster</name>
        <dbReference type="ChEBI" id="CHEBI:49883"/>
    </ligand>
</feature>
<feature type="binding site" evidence="2">
    <location>
        <position position="38"/>
    </location>
    <ligand>
        <name>[4Fe-4S] cluster</name>
        <dbReference type="ChEBI" id="CHEBI:49883"/>
    </ligand>
</feature>
<feature type="binding site" evidence="2">
    <location>
        <position position="102"/>
    </location>
    <ligand>
        <name>[4Fe-4S] cluster</name>
        <dbReference type="ChEBI" id="CHEBI:49883"/>
    </ligand>
</feature>
<feature type="binding site" evidence="2">
    <location>
        <position position="132"/>
    </location>
    <ligand>
        <name>[4Fe-4S] cluster</name>
        <dbReference type="ChEBI" id="CHEBI:49883"/>
    </ligand>
</feature>
<name>NUOB_RUTMC</name>
<evidence type="ECO:0000250" key="1"/>
<evidence type="ECO:0000255" key="2">
    <source>
        <dbReference type="HAMAP-Rule" id="MF_01356"/>
    </source>
</evidence>
<protein>
    <recommendedName>
        <fullName evidence="2">NADH-quinone oxidoreductase subunit B</fullName>
        <ecNumber evidence="2">7.1.1.-</ecNumber>
    </recommendedName>
    <alternativeName>
        <fullName evidence="2">NADH dehydrogenase I subunit B</fullName>
    </alternativeName>
    <alternativeName>
        <fullName evidence="2">NDH-1 subunit B</fullName>
    </alternativeName>
</protein>
<organism>
    <name type="scientific">Ruthia magnifica subsp. Calyptogena magnifica</name>
    <dbReference type="NCBI Taxonomy" id="413404"/>
    <lineage>
        <taxon>Bacteria</taxon>
        <taxon>Pseudomonadati</taxon>
        <taxon>Pseudomonadota</taxon>
        <taxon>Gammaproteobacteria</taxon>
        <taxon>Candidatus Pseudothioglobaceae</taxon>
        <taxon>Candidatus Ruthturnera</taxon>
    </lineage>
</organism>
<sequence length="159" mass="17580">MAIEGLMKQGFVTTSLNNVINWARTGSLWPMTFGLACCAVEMMEAGSSRYDLDRFGIVFRPTPRQSDLMIVAGTLTNKMAPALRKVYDQMPEPRWVISMGSCANGGGYYHYSYAVVRGCDRIVPVDIYVPGCPPTAEALLYGIIQLQDKIRSTNTIART</sequence>
<accession>A1AVR3</accession>
<dbReference type="EC" id="7.1.1.-" evidence="2"/>
<dbReference type="EMBL" id="CP000488">
    <property type="protein sequence ID" value="ABL02020.1"/>
    <property type="molecule type" value="Genomic_DNA"/>
</dbReference>
<dbReference type="RefSeq" id="WP_011737645.1">
    <property type="nucleotide sequence ID" value="NC_008610.1"/>
</dbReference>
<dbReference type="SMR" id="A1AVR3"/>
<dbReference type="STRING" id="413404.Rmag_0238"/>
<dbReference type="KEGG" id="rma:Rmag_0238"/>
<dbReference type="eggNOG" id="COG0377">
    <property type="taxonomic scope" value="Bacteria"/>
</dbReference>
<dbReference type="HOGENOM" id="CLU_055737_7_3_6"/>
<dbReference type="OrthoDB" id="9786737at2"/>
<dbReference type="Proteomes" id="UP000002587">
    <property type="component" value="Chromosome"/>
</dbReference>
<dbReference type="GO" id="GO:0005886">
    <property type="term" value="C:plasma membrane"/>
    <property type="evidence" value="ECO:0007669"/>
    <property type="project" value="UniProtKB-SubCell"/>
</dbReference>
<dbReference type="GO" id="GO:0045271">
    <property type="term" value="C:respiratory chain complex I"/>
    <property type="evidence" value="ECO:0007669"/>
    <property type="project" value="TreeGrafter"/>
</dbReference>
<dbReference type="GO" id="GO:0051539">
    <property type="term" value="F:4 iron, 4 sulfur cluster binding"/>
    <property type="evidence" value="ECO:0007669"/>
    <property type="project" value="UniProtKB-KW"/>
</dbReference>
<dbReference type="GO" id="GO:0005506">
    <property type="term" value="F:iron ion binding"/>
    <property type="evidence" value="ECO:0007669"/>
    <property type="project" value="UniProtKB-UniRule"/>
</dbReference>
<dbReference type="GO" id="GO:0008137">
    <property type="term" value="F:NADH dehydrogenase (ubiquinone) activity"/>
    <property type="evidence" value="ECO:0007669"/>
    <property type="project" value="InterPro"/>
</dbReference>
<dbReference type="GO" id="GO:0050136">
    <property type="term" value="F:NADH:ubiquinone reductase (non-electrogenic) activity"/>
    <property type="evidence" value="ECO:0007669"/>
    <property type="project" value="UniProtKB-UniRule"/>
</dbReference>
<dbReference type="GO" id="GO:0048038">
    <property type="term" value="F:quinone binding"/>
    <property type="evidence" value="ECO:0007669"/>
    <property type="project" value="UniProtKB-KW"/>
</dbReference>
<dbReference type="GO" id="GO:0009060">
    <property type="term" value="P:aerobic respiration"/>
    <property type="evidence" value="ECO:0007669"/>
    <property type="project" value="TreeGrafter"/>
</dbReference>
<dbReference type="GO" id="GO:0015990">
    <property type="term" value="P:electron transport coupled proton transport"/>
    <property type="evidence" value="ECO:0007669"/>
    <property type="project" value="TreeGrafter"/>
</dbReference>
<dbReference type="FunFam" id="3.40.50.12280:FF:000001">
    <property type="entry name" value="NADH-quinone oxidoreductase subunit B 2"/>
    <property type="match status" value="1"/>
</dbReference>
<dbReference type="Gene3D" id="3.40.50.12280">
    <property type="match status" value="1"/>
</dbReference>
<dbReference type="HAMAP" id="MF_01356">
    <property type="entry name" value="NDH1_NuoB"/>
    <property type="match status" value="1"/>
</dbReference>
<dbReference type="InterPro" id="IPR006137">
    <property type="entry name" value="NADH_UbQ_OxRdtase-like_20kDa"/>
</dbReference>
<dbReference type="InterPro" id="IPR006138">
    <property type="entry name" value="NADH_UQ_OxRdtase_20Kd_su"/>
</dbReference>
<dbReference type="NCBIfam" id="TIGR01957">
    <property type="entry name" value="nuoB_fam"/>
    <property type="match status" value="1"/>
</dbReference>
<dbReference type="NCBIfam" id="NF005012">
    <property type="entry name" value="PRK06411.1"/>
    <property type="match status" value="1"/>
</dbReference>
<dbReference type="PANTHER" id="PTHR11995">
    <property type="entry name" value="NADH DEHYDROGENASE"/>
    <property type="match status" value="1"/>
</dbReference>
<dbReference type="PANTHER" id="PTHR11995:SF14">
    <property type="entry name" value="NADH DEHYDROGENASE [UBIQUINONE] IRON-SULFUR PROTEIN 7, MITOCHONDRIAL"/>
    <property type="match status" value="1"/>
</dbReference>
<dbReference type="Pfam" id="PF01058">
    <property type="entry name" value="Oxidored_q6"/>
    <property type="match status" value="1"/>
</dbReference>
<dbReference type="SUPFAM" id="SSF56770">
    <property type="entry name" value="HydA/Nqo6-like"/>
    <property type="match status" value="1"/>
</dbReference>
<dbReference type="PROSITE" id="PS01150">
    <property type="entry name" value="COMPLEX1_20K"/>
    <property type="match status" value="1"/>
</dbReference>
<comment type="function">
    <text evidence="1">NDH-1 shuttles electrons from NADH, via FMN and iron-sulfur (Fe-S) centers, to quinones in the respiratory chain. Couples the redox reaction to proton translocation (for every two electrons transferred, four hydrogen ions are translocated across the cytoplasmic membrane), and thus conserves the redox energy in a proton gradient (By similarity).</text>
</comment>
<comment type="catalytic activity">
    <reaction evidence="2">
        <text>a quinone + NADH + 5 H(+)(in) = a quinol + NAD(+) + 4 H(+)(out)</text>
        <dbReference type="Rhea" id="RHEA:57888"/>
        <dbReference type="ChEBI" id="CHEBI:15378"/>
        <dbReference type="ChEBI" id="CHEBI:24646"/>
        <dbReference type="ChEBI" id="CHEBI:57540"/>
        <dbReference type="ChEBI" id="CHEBI:57945"/>
        <dbReference type="ChEBI" id="CHEBI:132124"/>
    </reaction>
</comment>
<comment type="cofactor">
    <cofactor evidence="2">
        <name>[4Fe-4S] cluster</name>
        <dbReference type="ChEBI" id="CHEBI:49883"/>
    </cofactor>
    <text evidence="2">Binds 1 [4Fe-4S] cluster.</text>
</comment>
<comment type="subunit">
    <text evidence="2">NDH-1 is composed of 14 different subunits. Subunits NuoB, C, D, E, F, and G constitute the peripheral sector of the complex.</text>
</comment>
<comment type="subcellular location">
    <subcellularLocation>
        <location evidence="2">Cell inner membrane</location>
        <topology evidence="2">Peripheral membrane protein</topology>
        <orientation evidence="2">Cytoplasmic side</orientation>
    </subcellularLocation>
</comment>
<comment type="similarity">
    <text evidence="2">Belongs to the complex I 20 kDa subunit family.</text>
</comment>
<gene>
    <name evidence="2" type="primary">nuoB</name>
    <name type="ordered locus">Rmag_0238</name>
</gene>
<proteinExistence type="inferred from homology"/>
<keyword id="KW-0004">4Fe-4S</keyword>
<keyword id="KW-0997">Cell inner membrane</keyword>
<keyword id="KW-1003">Cell membrane</keyword>
<keyword id="KW-0408">Iron</keyword>
<keyword id="KW-0411">Iron-sulfur</keyword>
<keyword id="KW-0472">Membrane</keyword>
<keyword id="KW-0479">Metal-binding</keyword>
<keyword id="KW-0520">NAD</keyword>
<keyword id="KW-0874">Quinone</keyword>
<keyword id="KW-1278">Translocase</keyword>
<keyword id="KW-0813">Transport</keyword>
<keyword id="KW-0830">Ubiquinone</keyword>
<reference key="1">
    <citation type="journal article" date="2007" name="Science">
        <title>The Calyptogena magnifica chemoautotrophic symbiont genome.</title>
        <authorList>
            <person name="Newton I.L.G."/>
            <person name="Woyke T."/>
            <person name="Auchtung T.A."/>
            <person name="Dilly G.F."/>
            <person name="Dutton R.J."/>
            <person name="Fisher M.C."/>
            <person name="Fontanez K.M."/>
            <person name="Lau E."/>
            <person name="Stewart F.J."/>
            <person name="Richardson P.M."/>
            <person name="Barry K.W."/>
            <person name="Saunders E."/>
            <person name="Detter J.C."/>
            <person name="Wu D."/>
            <person name="Eisen J.A."/>
            <person name="Cavanaugh C.M."/>
        </authorList>
    </citation>
    <scope>NUCLEOTIDE SEQUENCE [LARGE SCALE GENOMIC DNA]</scope>
</reference>